<name>PACA_HELSU</name>
<evidence type="ECO:0000250" key="1"/>
<evidence type="ECO:0000250" key="2">
    <source>
        <dbReference type="UniProtKB" id="P18509"/>
    </source>
</evidence>
<evidence type="ECO:0000305" key="3"/>
<feature type="peptide" id="PRO_0000414103" description="PACAP-related peptide">
    <location>
        <begin position="1" status="less than"/>
        <end position="23" status="greater than"/>
    </location>
</feature>
<feature type="peptide" id="PRO_0000414104" description="Pituitary adenylate cyclase-activating polypeptide 38">
    <location>
        <begin position="24"/>
        <end position="56" status="greater than"/>
    </location>
</feature>
<feature type="peptide" id="PRO_0000414105" description="Pituitary adenylate cyclase-activating polypeptide 27">
    <location>
        <begin position="24"/>
        <end position="50"/>
    </location>
</feature>
<feature type="region of interest" description="Important for receptor binding" evidence="2">
    <location>
        <begin position="42"/>
        <end position="50"/>
    </location>
</feature>
<feature type="modified residue" description="Leucine amide" evidence="1">
    <location>
        <position position="50"/>
    </location>
</feature>
<feature type="non-consecutive residues" evidence="3">
    <location>
        <begin position="23"/>
        <end position="24"/>
    </location>
</feature>
<feature type="non-terminal residue">
    <location>
        <position position="1"/>
    </location>
</feature>
<feature type="non-terminal residue">
    <location>
        <position position="56"/>
    </location>
</feature>
<organism>
    <name type="scientific">Heloderma suspectum</name>
    <name type="common">Gila monster</name>
    <dbReference type="NCBI Taxonomy" id="8554"/>
    <lineage>
        <taxon>Eukaryota</taxon>
        <taxon>Metazoa</taxon>
        <taxon>Chordata</taxon>
        <taxon>Craniata</taxon>
        <taxon>Vertebrata</taxon>
        <taxon>Euteleostomi</taxon>
        <taxon>Lepidosauria</taxon>
        <taxon>Squamata</taxon>
        <taxon>Bifurcata</taxon>
        <taxon>Unidentata</taxon>
        <taxon>Episquamata</taxon>
        <taxon>Toxicofera</taxon>
        <taxon>Anguimorpha</taxon>
        <taxon>Neoanguimorpha</taxon>
        <taxon>Helodermatidae</taxon>
        <taxon>Heloderma</taxon>
    </lineage>
</organism>
<protein>
    <recommendedName>
        <fullName>Pituitary adenylate cyclase-activating polypeptide</fullName>
        <shortName>PACAP</shortName>
    </recommendedName>
    <component>
        <recommendedName>
            <fullName>PACAP-related peptide</fullName>
        </recommendedName>
        <alternativeName>
            <fullName>PRP-48</fullName>
        </alternativeName>
    </component>
    <component>
        <recommendedName>
            <fullName>Pituitary adenylate cyclase-activating polypeptide 27</fullName>
            <shortName>PACAP-27</shortName>
            <shortName>PACAP27</shortName>
        </recommendedName>
    </component>
    <component>
        <recommendedName>
            <fullName>Pituitary adenylate cyclase-activating polypeptide 38</fullName>
            <shortName>PACAP-38</shortName>
            <shortName>PACAP38</shortName>
        </recommendedName>
    </component>
</protein>
<sequence length="56" mass="6629">IFNKAYRKVLGQLSARKYLHSLMHSDGIFTDSYSRYRKQMAVKKYLAAVLGKRYKQ</sequence>
<gene>
    <name type="primary">Adcyap1</name>
</gene>
<dbReference type="BMRB" id="P0DJ95"/>
<dbReference type="GO" id="GO:0005576">
    <property type="term" value="C:extracellular region"/>
    <property type="evidence" value="ECO:0007669"/>
    <property type="project" value="UniProtKB-SubCell"/>
</dbReference>
<dbReference type="GO" id="GO:0043005">
    <property type="term" value="C:neuron projection"/>
    <property type="evidence" value="ECO:0007669"/>
    <property type="project" value="TreeGrafter"/>
</dbReference>
<dbReference type="GO" id="GO:0043204">
    <property type="term" value="C:perikaryon"/>
    <property type="evidence" value="ECO:0007669"/>
    <property type="project" value="TreeGrafter"/>
</dbReference>
<dbReference type="GO" id="GO:0005184">
    <property type="term" value="F:neuropeptide hormone activity"/>
    <property type="evidence" value="ECO:0000250"/>
    <property type="project" value="UniProtKB"/>
</dbReference>
<dbReference type="GO" id="GO:0051428">
    <property type="term" value="F:peptide hormone receptor binding"/>
    <property type="evidence" value="ECO:0007669"/>
    <property type="project" value="TreeGrafter"/>
</dbReference>
<dbReference type="GO" id="GO:0016521">
    <property type="term" value="F:pituitary adenylate cyclase activating polypeptide activity"/>
    <property type="evidence" value="ECO:0000250"/>
    <property type="project" value="UniProtKB"/>
</dbReference>
<dbReference type="GO" id="GO:0031891">
    <property type="term" value="F:type 1 vasoactive intestinal polypeptide receptor binding"/>
    <property type="evidence" value="ECO:0000250"/>
    <property type="project" value="UniProtKB"/>
</dbReference>
<dbReference type="GO" id="GO:0031892">
    <property type="term" value="F:type 2 vasoactive intestinal polypeptide receptor binding"/>
    <property type="evidence" value="ECO:0000250"/>
    <property type="project" value="UniProtKB"/>
</dbReference>
<dbReference type="GO" id="GO:0007189">
    <property type="term" value="P:adenylate cyclase-activating G protein-coupled receptor signaling pathway"/>
    <property type="evidence" value="ECO:0000250"/>
    <property type="project" value="UniProtKB"/>
</dbReference>
<dbReference type="GO" id="GO:0030073">
    <property type="term" value="P:insulin secretion"/>
    <property type="evidence" value="ECO:0000250"/>
    <property type="project" value="UniProtKB"/>
</dbReference>
<dbReference type="GO" id="GO:0031175">
    <property type="term" value="P:neuron projection development"/>
    <property type="evidence" value="ECO:0007669"/>
    <property type="project" value="TreeGrafter"/>
</dbReference>
<dbReference type="GO" id="GO:0007218">
    <property type="term" value="P:neuropeptide signaling pathway"/>
    <property type="evidence" value="ECO:0007669"/>
    <property type="project" value="TreeGrafter"/>
</dbReference>
<dbReference type="GO" id="GO:0007204">
    <property type="term" value="P:positive regulation of cytosolic calcium ion concentration"/>
    <property type="evidence" value="ECO:0000250"/>
    <property type="project" value="UniProtKB"/>
</dbReference>
<dbReference type="GO" id="GO:0070374">
    <property type="term" value="P:positive regulation of ERK1 and ERK2 cascade"/>
    <property type="evidence" value="ECO:0007669"/>
    <property type="project" value="TreeGrafter"/>
</dbReference>
<dbReference type="GO" id="GO:0010628">
    <property type="term" value="P:positive regulation of gene expression"/>
    <property type="evidence" value="ECO:0000250"/>
    <property type="project" value="UniProtKB"/>
</dbReference>
<dbReference type="GO" id="GO:0060124">
    <property type="term" value="P:positive regulation of growth hormone secretion"/>
    <property type="evidence" value="ECO:0000250"/>
    <property type="project" value="UniProtKB"/>
</dbReference>
<dbReference type="GO" id="GO:0032880">
    <property type="term" value="P:regulation of protein localization"/>
    <property type="evidence" value="ECO:0007669"/>
    <property type="project" value="TreeGrafter"/>
</dbReference>
<dbReference type="Gene3D" id="6.10.250.590">
    <property type="match status" value="1"/>
</dbReference>
<dbReference type="InterPro" id="IPR000532">
    <property type="entry name" value="Glucagon_GIP_secretin_VIP"/>
</dbReference>
<dbReference type="InterPro" id="IPR046963">
    <property type="entry name" value="VIP/GHRH-like"/>
</dbReference>
<dbReference type="PANTHER" id="PTHR11213">
    <property type="entry name" value="GLUCAGON-FAMILY NEUROPEPTIDE"/>
    <property type="match status" value="1"/>
</dbReference>
<dbReference type="PANTHER" id="PTHR11213:SF1">
    <property type="entry name" value="PITUITARY ADENYLATE CYCLASE-ACTIVATING POLYPEPTIDE"/>
    <property type="match status" value="1"/>
</dbReference>
<dbReference type="Pfam" id="PF00123">
    <property type="entry name" value="Hormone_2"/>
    <property type="match status" value="2"/>
</dbReference>
<dbReference type="PRINTS" id="PR00275">
    <property type="entry name" value="GLUCAGON"/>
</dbReference>
<dbReference type="SMART" id="SM00070">
    <property type="entry name" value="GLUCA"/>
    <property type="match status" value="2"/>
</dbReference>
<dbReference type="PROSITE" id="PS00260">
    <property type="entry name" value="GLUCAGON"/>
    <property type="match status" value="1"/>
</dbReference>
<comment type="function">
    <text evidence="2">PACAP is a neuropeptide involved in diverse array of physiological processes through activating the PACAP subfamily of class B1 G protein-coupled receptors: VIP receptor 1 (VIPR1), VIP receptor 2 (VIPR2), and PACAP type I receptor (ADCYAP1R1). Exerts neuroprotective and general cytoprotective effects due to anti-apoptotic, anti-inflammatory, and antioxidant actions.</text>
</comment>
<comment type="subunit">
    <text evidence="2">Interacts with ADCYAP1R1 (via N-terminal extracellular domain).</text>
</comment>
<comment type="subcellular location">
    <subcellularLocation>
        <location evidence="1">Secreted</location>
    </subcellularLocation>
</comment>
<comment type="similarity">
    <text evidence="3">Belongs to the glucagon family.</text>
</comment>
<reference key="1">
    <citation type="journal article" date="1998" name="J. Biol. Chem.">
        <title>Molecular cloning of the helodermin and exendin-4 cDNAs in the lizard. Relationship to vasoactive intestinal polypeptide/pituitary adenylate cyclase activating polypeptide and glucagon-like peptide 1 and evidence against the existence of mammalian homologues.</title>
        <authorList>
            <person name="Pohl M."/>
            <person name="Wank S.A."/>
        </authorList>
    </citation>
    <scope>NUCLEOTIDE SEQUENCE [MRNA]</scope>
    <source>
        <tissue>Brain</tissue>
    </source>
</reference>
<proteinExistence type="evidence at transcript level"/>
<accession>P0DJ95</accession>
<keyword id="KW-0027">Amidation</keyword>
<keyword id="KW-0372">Hormone</keyword>
<keyword id="KW-0964">Secreted</keyword>